<gene>
    <name evidence="3" type="primary">hdnoR</name>
</gene>
<dbReference type="EMBL" id="AJ507836">
    <property type="protein sequence ID" value="CAD47972.1"/>
    <property type="molecule type" value="Genomic_DNA"/>
</dbReference>
<dbReference type="RefSeq" id="WP_016359483.1">
    <property type="nucleotide sequence ID" value="NZ_JAGINZ010000002.1"/>
</dbReference>
<dbReference type="RefSeq" id="YP_007988798.1">
    <property type="nucleotide sequence ID" value="NC_021229.1"/>
</dbReference>
<dbReference type="SMR" id="Q8GAF9"/>
<dbReference type="GO" id="GO:0003700">
    <property type="term" value="F:DNA-binding transcription factor activity"/>
    <property type="evidence" value="ECO:0007669"/>
    <property type="project" value="TreeGrafter"/>
</dbReference>
<dbReference type="GO" id="GO:0000976">
    <property type="term" value="F:transcription cis-regulatory region binding"/>
    <property type="evidence" value="ECO:0007669"/>
    <property type="project" value="TreeGrafter"/>
</dbReference>
<dbReference type="Gene3D" id="1.10.357.10">
    <property type="entry name" value="Tetracycline Repressor, domain 2"/>
    <property type="match status" value="1"/>
</dbReference>
<dbReference type="InterPro" id="IPR009057">
    <property type="entry name" value="Homeodomain-like_sf"/>
</dbReference>
<dbReference type="InterPro" id="IPR050109">
    <property type="entry name" value="HTH-type_TetR-like_transc_reg"/>
</dbReference>
<dbReference type="InterPro" id="IPR001647">
    <property type="entry name" value="HTH_TetR"/>
</dbReference>
<dbReference type="InterPro" id="IPR036271">
    <property type="entry name" value="Tet_transcr_reg_TetR-rel_C_sf"/>
</dbReference>
<dbReference type="PANTHER" id="PTHR30055:SF234">
    <property type="entry name" value="HTH-TYPE TRANSCRIPTIONAL REGULATOR BETI"/>
    <property type="match status" value="1"/>
</dbReference>
<dbReference type="PANTHER" id="PTHR30055">
    <property type="entry name" value="HTH-TYPE TRANSCRIPTIONAL REGULATOR RUTR"/>
    <property type="match status" value="1"/>
</dbReference>
<dbReference type="Pfam" id="PF00440">
    <property type="entry name" value="TetR_N"/>
    <property type="match status" value="1"/>
</dbReference>
<dbReference type="SUPFAM" id="SSF46689">
    <property type="entry name" value="Homeodomain-like"/>
    <property type="match status" value="1"/>
</dbReference>
<dbReference type="SUPFAM" id="SSF48498">
    <property type="entry name" value="Tetracyclin repressor-like, C-terminal domain"/>
    <property type="match status" value="1"/>
</dbReference>
<dbReference type="PROSITE" id="PS50977">
    <property type="entry name" value="HTH_TETR_2"/>
    <property type="match status" value="1"/>
</dbReference>
<evidence type="ECO:0000255" key="1">
    <source>
        <dbReference type="PROSITE-ProRule" id="PRU00335"/>
    </source>
</evidence>
<evidence type="ECO:0000269" key="2">
    <source>
    </source>
</evidence>
<evidence type="ECO:0000303" key="3">
    <source>
    </source>
</evidence>
<evidence type="ECO:0000305" key="4"/>
<comment type="function">
    <text evidence="2">Represses expression of the 6-hydroxy-D-nicotine oxidase (6-hdno) (PubMed:14534317). Acts by binding to a gene operator site consisting of two inverted repeats, IR1 (covering the 6-hdno promoter region) and IR2 (situated upstream from the 6-hdno promoter) (PubMed:14534317). Binding to one site may stimulate binding of the protein to the second site (PubMed:14534317).</text>
</comment>
<comment type="activity regulation">
    <text evidence="2">6-hydroxy-D-nicotine and 6-hydroxy-L-nicotine prevent HdnoR from binding to the IR1 DNA (PubMed:14534317). Both 6-hydroxy-nicotine enantiomers prevent DNA-protein complex formation at micromolar concentrations, with the D-enantiomer being twice as potent as the L-enantiomer (PubMed:14534317). A thousand-fold higher L-nicotine concentration is required to elicit a similar effect (PubMed:14534317).</text>
</comment>
<comment type="subunit">
    <text evidence="2">Homodimer.</text>
</comment>
<comment type="induction">
    <text evidence="2">Constitutively expressed.</text>
</comment>
<geneLocation type="plasmid">
    <name>pAO1</name>
</geneLocation>
<sequence length="194" mass="21726">MRISTVDRRQQLIDAAIRVIRRDGVESASLRTIASEAKASLAAVHVCFTNKDELMQAAAAELLQQLVRSIPRVVDGSEDVRAIAHRVMDLFWAQMVSDELNILAQFEIGIWAKRNPHHGDLSRTVYSDYEKEISKLLVAAAKRQKQTIAARNVARALIVIMDGCSLQYFADPSDPRHKDLCDNLVDAYLDRVGL</sequence>
<keyword id="KW-0238">DNA-binding</keyword>
<keyword id="KW-0614">Plasmid</keyword>
<keyword id="KW-0678">Repressor</keyword>
<keyword id="KW-0804">Transcription</keyword>
<keyword id="KW-0805">Transcription regulation</keyword>
<organism>
    <name type="scientific">Paenarthrobacter nicotinovorans</name>
    <name type="common">Arthrobacter nicotinovorans</name>
    <dbReference type="NCBI Taxonomy" id="29320"/>
    <lineage>
        <taxon>Bacteria</taxon>
        <taxon>Bacillati</taxon>
        <taxon>Actinomycetota</taxon>
        <taxon>Actinomycetes</taxon>
        <taxon>Micrococcales</taxon>
        <taxon>Micrococcaceae</taxon>
        <taxon>Paenarthrobacter</taxon>
    </lineage>
</organism>
<reference key="1">
    <citation type="journal article" date="2003" name="J. Bacteriol.">
        <title>Sequence of the 165-kilobase catabolic plasmid pAO1 from Arthrobacter nicotinovorans and identification of a pAO1-dependent nicotine uptake system.</title>
        <authorList>
            <person name="Igloi G.L."/>
            <person name="Brandsch R."/>
        </authorList>
    </citation>
    <scope>NUCLEOTIDE SEQUENCE [LARGE SCALE GENOMIC DNA]</scope>
    <source>
        <strain>ATCC 49919 / DSM 420 / JCM 3874 / KCTC 9902 / LMG 16253 / NBRC 15511</strain>
        <plasmid>pAO1</plasmid>
    </source>
</reference>
<reference key="2">
    <citation type="journal article" date="2003" name="J. Biol. Chem.">
        <title>Characterization of HdnoR, the transcriptional repressor of the 6-hydroxy-D-nicotine oxidase gene of Arthrobacter nicotinovorans pAO1, and its DNA-binding activity in response to L- and D-nicotine derivatives.</title>
        <authorList>
            <person name="Sandu C."/>
            <person name="Chiribau C.B."/>
            <person name="Brandsch R."/>
        </authorList>
    </citation>
    <scope>FUNCTION</scope>
    <scope>DNA-BINDING</scope>
    <scope>ACTIVITY REGULATION</scope>
    <scope>SUBUNIT</scope>
    <scope>INDUCTION</scope>
    <source>
        <strain>ATCC 49919 / DSM 420 / JCM 3874 / KCTC 9902 / LMG 16253 / NBRC 15511</strain>
        <plasmid>pAO1</plasmid>
    </source>
</reference>
<proteinExistence type="evidence at protein level"/>
<protein>
    <recommendedName>
        <fullName evidence="4">HTH-type nicotine-responsive transcriptional repressor HdnoR</fullName>
    </recommendedName>
    <alternativeName>
        <fullName evidence="3">6-hydroxy-D-nicotine oxidase repressor HdnoR</fullName>
    </alternativeName>
    <alternativeName>
        <fullName evidence="3">6hdno repressor</fullName>
    </alternativeName>
</protein>
<name>HDNOR_PAENI</name>
<feature type="chain" id="PRO_0000459765" description="HTH-type nicotine-responsive transcriptional repressor HdnoR">
    <location>
        <begin position="1"/>
        <end position="194"/>
    </location>
</feature>
<feature type="domain" description="HTH tetR-type" evidence="1">
    <location>
        <begin position="6"/>
        <end position="66"/>
    </location>
</feature>
<feature type="DNA-binding region" description="H-T-H motif" evidence="1">
    <location>
        <begin position="29"/>
        <end position="48"/>
    </location>
</feature>
<accession>Q8GAF9</accession>